<accession>B4QU20</accession>
<proteinExistence type="inferred from homology"/>
<protein>
    <recommendedName>
        <fullName evidence="1">Microtubule-associated protein Jupiter</fullName>
    </recommendedName>
</protein>
<organism>
    <name type="scientific">Drosophila simulans</name>
    <name type="common">Fruit fly</name>
    <dbReference type="NCBI Taxonomy" id="7240"/>
    <lineage>
        <taxon>Eukaryota</taxon>
        <taxon>Metazoa</taxon>
        <taxon>Ecdysozoa</taxon>
        <taxon>Arthropoda</taxon>
        <taxon>Hexapoda</taxon>
        <taxon>Insecta</taxon>
        <taxon>Pterygota</taxon>
        <taxon>Neoptera</taxon>
        <taxon>Endopterygota</taxon>
        <taxon>Diptera</taxon>
        <taxon>Brachycera</taxon>
        <taxon>Muscomorpha</taxon>
        <taxon>Ephydroidea</taxon>
        <taxon>Drosophilidae</taxon>
        <taxon>Drosophila</taxon>
        <taxon>Sophophora</taxon>
    </lineage>
</organism>
<gene>
    <name evidence="1" type="primary">Jupiter</name>
    <name type="ORF">GD20653</name>
</gene>
<name>JUPIT_DROSI</name>
<keyword id="KW-0963">Cytoplasm</keyword>
<keyword id="KW-0206">Cytoskeleton</keyword>
<keyword id="KW-0493">Microtubule</keyword>
<keyword id="KW-0539">Nucleus</keyword>
<keyword id="KW-0597">Phosphoprotein</keyword>
<keyword id="KW-1185">Reference proteome</keyword>
<reference evidence="4" key="1">
    <citation type="journal article" date="2007" name="Nature">
        <title>Evolution of genes and genomes on the Drosophila phylogeny.</title>
        <authorList>
            <consortium name="Drosophila 12 genomes consortium"/>
        </authorList>
    </citation>
    <scope>NUCLEOTIDE SEQUENCE [LARGE SCALE GENOMIC DNA]</scope>
</reference>
<feature type="chain" id="PRO_0000355132" description="Microtubule-associated protein Jupiter">
    <location>
        <begin position="1"/>
        <end position="168"/>
    </location>
</feature>
<feature type="region of interest" description="Disordered" evidence="2">
    <location>
        <begin position="1"/>
        <end position="33"/>
    </location>
</feature>
<feature type="region of interest" description="Disordered" evidence="2">
    <location>
        <begin position="76"/>
        <end position="106"/>
    </location>
</feature>
<feature type="region of interest" description="Disordered" evidence="2">
    <location>
        <begin position="124"/>
        <end position="168"/>
    </location>
</feature>
<feature type="compositionally biased region" description="Polar residues" evidence="2">
    <location>
        <begin position="1"/>
        <end position="14"/>
    </location>
</feature>
<feature type="compositionally biased region" description="Basic and acidic residues" evidence="2">
    <location>
        <begin position="76"/>
        <end position="87"/>
    </location>
</feature>
<feature type="compositionally biased region" description="Low complexity" evidence="2">
    <location>
        <begin position="131"/>
        <end position="144"/>
    </location>
</feature>
<feature type="compositionally biased region" description="Polar residues" evidence="2">
    <location>
        <begin position="145"/>
        <end position="155"/>
    </location>
</feature>
<feature type="modified residue" description="Phosphoserine" evidence="1">
    <location>
        <position position="24"/>
    </location>
</feature>
<feature type="modified residue" description="Phosphothreonine" evidence="1">
    <location>
        <position position="35"/>
    </location>
</feature>
<feature type="modified residue" description="Phosphothreonine" evidence="1">
    <location>
        <position position="92"/>
    </location>
</feature>
<feature type="modified residue" description="Phosphothreonine" evidence="1">
    <location>
        <position position="96"/>
    </location>
</feature>
<feature type="modified residue" description="Phosphoserine" evidence="1">
    <location>
        <position position="105"/>
    </location>
</feature>
<feature type="modified residue" description="Phosphoserine" evidence="1">
    <location>
        <position position="133"/>
    </location>
</feature>
<feature type="modified residue" description="Phosphoserine" evidence="1">
    <location>
        <position position="144"/>
    </location>
</feature>
<sequence>MISNFDCTDNQASSKVLRPPGGGSSDIFGSEMPQTPRNVKNRMASNIFAAEKDNGVKNNVRQGAHRFYFIGDAPRRGQKTVDSHSRLFGEPTRPITPGKNHMKSSIPFGQNTEAVAAQKLLTTNGHYNGKSGSVSSASSSVSSSTENLKMNSGSRSGEKRLALTGAGK</sequence>
<evidence type="ECO:0000250" key="1">
    <source>
        <dbReference type="UniProtKB" id="Q9I7K0"/>
    </source>
</evidence>
<evidence type="ECO:0000256" key="2">
    <source>
        <dbReference type="SAM" id="MobiDB-lite"/>
    </source>
</evidence>
<evidence type="ECO:0000305" key="3"/>
<evidence type="ECO:0000312" key="4">
    <source>
        <dbReference type="EMBL" id="EDX13351.1"/>
    </source>
</evidence>
<dbReference type="EMBL" id="CM000364">
    <property type="protein sequence ID" value="EDX13351.1"/>
    <property type="molecule type" value="Genomic_DNA"/>
</dbReference>
<dbReference type="STRING" id="7240.B4QU20"/>
<dbReference type="EnsemblMetazoa" id="FBtr0360642">
    <property type="protein sequence ID" value="FBpp0324457"/>
    <property type="gene ID" value="FBgn0192119"/>
</dbReference>
<dbReference type="EnsemblMetazoa" id="XM_016176964.3">
    <property type="protein sequence ID" value="XP_016035139.1"/>
    <property type="gene ID" value="LOC6728503"/>
</dbReference>
<dbReference type="HOGENOM" id="CLU_076719_0_0_1"/>
<dbReference type="OrthoDB" id="6367565at2759"/>
<dbReference type="PhylomeDB" id="B4QU20"/>
<dbReference type="ChiTaRS" id="Jupiter">
    <property type="organism name" value="fly"/>
</dbReference>
<dbReference type="Proteomes" id="UP000000304">
    <property type="component" value="Chromosome 3R"/>
</dbReference>
<dbReference type="Bgee" id="FBgn0192119">
    <property type="expression patterns" value="Expressed in embryo and 3 other cell types or tissues"/>
</dbReference>
<dbReference type="GO" id="GO:0005829">
    <property type="term" value="C:cytosol"/>
    <property type="evidence" value="ECO:0000250"/>
    <property type="project" value="UniProtKB"/>
</dbReference>
<dbReference type="GO" id="GO:0005874">
    <property type="term" value="C:microtubule"/>
    <property type="evidence" value="ECO:0007669"/>
    <property type="project" value="UniProtKB-KW"/>
</dbReference>
<dbReference type="GO" id="GO:0005875">
    <property type="term" value="C:microtubule associated complex"/>
    <property type="evidence" value="ECO:0000250"/>
    <property type="project" value="UniProtKB"/>
</dbReference>
<dbReference type="GO" id="GO:0005634">
    <property type="term" value="C:nucleus"/>
    <property type="evidence" value="ECO:0000250"/>
    <property type="project" value="UniProtKB"/>
</dbReference>
<dbReference type="GO" id="GO:0005819">
    <property type="term" value="C:spindle"/>
    <property type="evidence" value="ECO:0007669"/>
    <property type="project" value="UniProtKB-SubCell"/>
</dbReference>
<dbReference type="GO" id="GO:0008017">
    <property type="term" value="F:microtubule binding"/>
    <property type="evidence" value="ECO:0000250"/>
    <property type="project" value="UniProtKB"/>
</dbReference>
<dbReference type="GO" id="GO:0005200">
    <property type="term" value="F:structural constituent of cytoskeleton"/>
    <property type="evidence" value="ECO:0000250"/>
    <property type="project" value="UniProtKB"/>
</dbReference>
<dbReference type="GO" id="GO:0031116">
    <property type="term" value="P:positive regulation of microtubule polymerization"/>
    <property type="evidence" value="ECO:0000250"/>
    <property type="project" value="UniProtKB"/>
</dbReference>
<dbReference type="InterPro" id="IPR033335">
    <property type="entry name" value="JUPITER"/>
</dbReference>
<dbReference type="PANTHER" id="PTHR34930">
    <property type="entry name" value="GEO05313P1"/>
    <property type="match status" value="1"/>
</dbReference>
<dbReference type="PANTHER" id="PTHR34930:SF2">
    <property type="entry name" value="MICROTUBULE-ASSOCIATED PROTEIN JUPITER"/>
    <property type="match status" value="1"/>
</dbReference>
<dbReference type="Pfam" id="PF17054">
    <property type="entry name" value="JUPITER"/>
    <property type="match status" value="1"/>
</dbReference>
<comment type="function">
    <text evidence="1">Binds to all microtubule populations.</text>
</comment>
<comment type="subcellular location">
    <subcellularLocation>
        <location evidence="1">Nucleus</location>
    </subcellularLocation>
    <subcellularLocation>
        <location evidence="1">Cytoplasm</location>
    </subcellularLocation>
    <subcellularLocation>
        <location evidence="1">Cytoplasm</location>
        <location evidence="1">Cytoskeleton</location>
    </subcellularLocation>
    <subcellularLocation>
        <location evidence="1">Cytoplasm</location>
        <location evidence="1">Cytoskeleton</location>
        <location evidence="1">Spindle</location>
    </subcellularLocation>
</comment>
<comment type="similarity">
    <text evidence="3">Belongs to the MAP Jupiter family.</text>
</comment>